<keyword id="KW-0002">3D-structure</keyword>
<keyword id="KW-1064">Adaptive immunity</keyword>
<keyword id="KW-1003">Cell membrane</keyword>
<keyword id="KW-1015">Disulfide bond</keyword>
<keyword id="KW-0325">Glycoprotein</keyword>
<keyword id="KW-0391">Immunity</keyword>
<keyword id="KW-0393">Immunoglobulin domain</keyword>
<keyword id="KW-0472">Membrane</keyword>
<keyword id="KW-0675">Receptor</keyword>
<keyword id="KW-1185">Reference proteome</keyword>
<keyword id="KW-0732">Signal</keyword>
<keyword id="KW-1279">T cell receptor</keyword>
<dbReference type="EMBL" id="AC245505">
    <property type="status" value="NOT_ANNOTATED_CDS"/>
    <property type="molecule type" value="Genomic_DNA"/>
</dbReference>
<dbReference type="PDB" id="4UDT">
    <property type="method" value="X-ray"/>
    <property type="resolution" value="1.35 A"/>
    <property type="chains" value="A=21-110"/>
</dbReference>
<dbReference type="PDB" id="4UDU">
    <property type="method" value="X-ray"/>
    <property type="resolution" value="2.50 A"/>
    <property type="chains" value="A=21-110"/>
</dbReference>
<dbReference type="PDB" id="5FK9">
    <property type="method" value="X-ray"/>
    <property type="resolution" value="3.10 A"/>
    <property type="chains" value="A=21-110"/>
</dbReference>
<dbReference type="PDB" id="5FKA">
    <property type="method" value="X-ray"/>
    <property type="resolution" value="2.40 A"/>
    <property type="chains" value="A=21-110"/>
</dbReference>
<dbReference type="PDB" id="5MEN">
    <property type="method" value="X-ray"/>
    <property type="resolution" value="2.81 A"/>
    <property type="chains" value="D=22-109"/>
</dbReference>
<dbReference type="PDB" id="6R2L">
    <property type="method" value="X-ray"/>
    <property type="resolution" value="2.30 A"/>
    <property type="chains" value="D=21-109"/>
</dbReference>
<dbReference type="PDBsum" id="4UDT"/>
<dbReference type="PDBsum" id="4UDU"/>
<dbReference type="PDBsum" id="5FK9"/>
<dbReference type="PDBsum" id="5FKA"/>
<dbReference type="PDBsum" id="5MEN"/>
<dbReference type="PDBsum" id="6R2L"/>
<dbReference type="SMR" id="A0A0B4J277"/>
<dbReference type="FunCoup" id="A0A0B4J277">
    <property type="interactions" value="330"/>
</dbReference>
<dbReference type="IMGT_GENE-DB" id="TRAV22"/>
<dbReference type="GlyCosmos" id="A0A0B4J277">
    <property type="glycosylation" value="2 sites, No reported glycans"/>
</dbReference>
<dbReference type="GlyGen" id="A0A0B4J277">
    <property type="glycosylation" value="2 sites"/>
</dbReference>
<dbReference type="BioMuta" id="TRAV22"/>
<dbReference type="Ensembl" id="ENST00000390450.3">
    <property type="protein sequence ID" value="ENSP00000452420.1"/>
    <property type="gene ID" value="ENSG00000211802.3"/>
</dbReference>
<dbReference type="AGR" id="HGNC:12119"/>
<dbReference type="GeneCards" id="TRAV22"/>
<dbReference type="HGNC" id="HGNC:12119">
    <property type="gene designation" value="TRAV22"/>
</dbReference>
<dbReference type="HPA" id="ENSG00000211802">
    <property type="expression patterns" value="Tissue enriched (lymphoid)"/>
</dbReference>
<dbReference type="neXtProt" id="NX_A0A0B4J277"/>
<dbReference type="OpenTargets" id="ENSG00000211802"/>
<dbReference type="VEuPathDB" id="HostDB:ENSG00000211802"/>
<dbReference type="GeneTree" id="ENSGT00900000140957"/>
<dbReference type="HOGENOM" id="CLU_077975_8_3_1"/>
<dbReference type="InParanoid" id="A0A0B4J277"/>
<dbReference type="OMA" id="SAYEWSG"/>
<dbReference type="OrthoDB" id="9805246at2759"/>
<dbReference type="PAN-GO" id="A0A0B4J277">
    <property type="GO annotations" value="0 GO annotations based on evolutionary models"/>
</dbReference>
<dbReference type="PhylomeDB" id="A0A0B4J277"/>
<dbReference type="PathwayCommons" id="A0A0B4J277"/>
<dbReference type="ChiTaRS" id="TRAV22">
    <property type="organism name" value="human"/>
</dbReference>
<dbReference type="Pharos" id="A0A0B4J277">
    <property type="development level" value="Tdark"/>
</dbReference>
<dbReference type="PRO" id="PR:A0A0B4J277"/>
<dbReference type="Proteomes" id="UP000005640">
    <property type="component" value="Chromosome 14"/>
</dbReference>
<dbReference type="RNAct" id="A0A0B4J277">
    <property type="molecule type" value="protein"/>
</dbReference>
<dbReference type="Bgee" id="ENSG00000211802">
    <property type="expression patterns" value="Expressed in granulocyte and 82 other cell types or tissues"/>
</dbReference>
<dbReference type="GO" id="GO:0042101">
    <property type="term" value="C:T cell receptor complex"/>
    <property type="evidence" value="ECO:0007669"/>
    <property type="project" value="UniProtKB-KW"/>
</dbReference>
<dbReference type="GO" id="GO:0002250">
    <property type="term" value="P:adaptive immune response"/>
    <property type="evidence" value="ECO:0007669"/>
    <property type="project" value="UniProtKB-KW"/>
</dbReference>
<dbReference type="Gene3D" id="2.60.40.10">
    <property type="entry name" value="Immunoglobulins"/>
    <property type="match status" value="1"/>
</dbReference>
<dbReference type="InterPro" id="IPR007110">
    <property type="entry name" value="Ig-like_dom"/>
</dbReference>
<dbReference type="InterPro" id="IPR036179">
    <property type="entry name" value="Ig-like_dom_sf"/>
</dbReference>
<dbReference type="InterPro" id="IPR013783">
    <property type="entry name" value="Ig-like_fold"/>
</dbReference>
<dbReference type="InterPro" id="IPR013106">
    <property type="entry name" value="Ig_V-set"/>
</dbReference>
<dbReference type="InterPro" id="IPR051896">
    <property type="entry name" value="TCR_alpha_variable"/>
</dbReference>
<dbReference type="PANTHER" id="PTHR19339:SF2">
    <property type="entry name" value="T CELL RECEPTOR ALPHA VARIABLE 22"/>
    <property type="match status" value="1"/>
</dbReference>
<dbReference type="PANTHER" id="PTHR19339">
    <property type="entry name" value="T CELL RECEPTOR ALPHA VARIABLE 39"/>
    <property type="match status" value="1"/>
</dbReference>
<dbReference type="Pfam" id="PF07686">
    <property type="entry name" value="V-set"/>
    <property type="match status" value="1"/>
</dbReference>
<dbReference type="SUPFAM" id="SSF48726">
    <property type="entry name" value="Immunoglobulin"/>
    <property type="match status" value="1"/>
</dbReference>
<dbReference type="PROSITE" id="PS50835">
    <property type="entry name" value="IG_LIKE"/>
    <property type="match status" value="1"/>
</dbReference>
<comment type="function">
    <text evidence="5 7 8 9">V region of the variable domain of T cell receptor (TR) alpha chain that participates in the antigen recognition (PubMed:24600447). Alpha-beta T cell receptors are antigen specific receptors which are essential to the immune response and are present on the cell surface of T lymphocytes. Recognize peptide-major histocompatibility (MH) (pMH) complexes that are displayed by antigen presenting cells (APC), a prerequisite for efficient T cell adaptive immunity against pathogens (PubMed:25493333). Binding of alpha-beta TR to pMH complex initiates TR-CD3 clustering on the cell surface and intracellular activation of LCK that phosphorylates the ITAM motifs of CD3G, CD3D, CD3E and CD247 enabling the recruitment of ZAP70. In turn ZAP70 phosphorylates LAT, which recruits numerous signaling molecules to form the LAT signalosome. The LAT signalosome propagates signal branching to three major signaling pathways, the calcium, the mitogen-activated protein kinase (MAPK) kinase and the nuclear factor NF-kappa-B (NF-kB) pathways, leading to the mobilization of transcription factors that are critical for gene expression and essential for T cell growth and differentiation (PubMed:23524462). The T cell repertoire is generated in the thymus, by V-(D)-J rearrangement. This repertoire is then shaped by intrathymic selection events to generate a peripheral T cell pool of self-MH restricted, non-autoaggressive T cells. Post-thymic interaction of alpha-beta TR with the pMH complexes shapes TR structural and functional avidity (PubMed:15040585).</text>
</comment>
<comment type="subunit">
    <text evidence="6">Alpha-beta TR is a heterodimer composed of an alpha and beta chain; disulfide-linked. The alpha-beta TR is associated with the transmembrane signaling CD3 coreceptor proteins to form the TR-CD3 (TcR or TCR). The assembly of alpha-beta TR heterodimers with CD3 occurs in the endoplasmic reticulum where a single alpha-beta TR heterodimer associates with one CD3D-CD3E heterodimer, one CD3G-CD3E heterodimer and one CD247 homodimer forming a stable octameric structure. CD3D-CD3E and CD3G-CD3E heterodimers preferentially associate with TR alpha and TR beta chains, respectively. The association of the CD247 homodimer is the last step of TcR assembly in the endoplasmic reticulum and is required for transport to the cell surface.</text>
</comment>
<comment type="subcellular location">
    <subcellularLocation>
        <location evidence="6">Cell membrane</location>
    </subcellularLocation>
</comment>
<comment type="polymorphism">
    <text evidence="11">There are several alleles. The sequence shown is that of IMGT allele TRAV22*01.</text>
</comment>
<proteinExistence type="evidence at protein level"/>
<gene>
    <name evidence="10" type="primary">TRAV22</name>
</gene>
<organism>
    <name type="scientific">Homo sapiens</name>
    <name type="common">Human</name>
    <dbReference type="NCBI Taxonomy" id="9606"/>
    <lineage>
        <taxon>Eukaryota</taxon>
        <taxon>Metazoa</taxon>
        <taxon>Chordata</taxon>
        <taxon>Craniata</taxon>
        <taxon>Vertebrata</taxon>
        <taxon>Euteleostomi</taxon>
        <taxon>Mammalia</taxon>
        <taxon>Eutheria</taxon>
        <taxon>Euarchontoglires</taxon>
        <taxon>Primates</taxon>
        <taxon>Haplorrhini</taxon>
        <taxon>Catarrhini</taxon>
        <taxon>Hominidae</taxon>
        <taxon>Homo</taxon>
    </lineage>
</organism>
<evidence type="ECO:0000255" key="1"/>
<evidence type="ECO:0000255" key="2">
    <source>
        <dbReference type="PROSITE-ProRule" id="PRU00114"/>
    </source>
</evidence>
<evidence type="ECO:0000269" key="3">
    <source>
    </source>
</evidence>
<evidence type="ECO:0000269" key="4">
    <source>
    </source>
</evidence>
<evidence type="ECO:0000303" key="5">
    <source>
    </source>
</evidence>
<evidence type="ECO:0000303" key="6">
    <source>
    </source>
</evidence>
<evidence type="ECO:0000303" key="7">
    <source>
    </source>
</evidence>
<evidence type="ECO:0000303" key="8">
    <source>
    </source>
</evidence>
<evidence type="ECO:0000303" key="9">
    <source>
    </source>
</evidence>
<evidence type="ECO:0000303" key="10">
    <source ref="2"/>
</evidence>
<evidence type="ECO:0000305" key="11"/>
<evidence type="ECO:0007744" key="12">
    <source>
        <dbReference type="PDB" id="4UDT"/>
    </source>
</evidence>
<evidence type="ECO:0007744" key="13">
    <source>
        <dbReference type="PDB" id="4UDU"/>
    </source>
</evidence>
<evidence type="ECO:0007744" key="14">
    <source>
        <dbReference type="PDB" id="5FK9"/>
    </source>
</evidence>
<evidence type="ECO:0007744" key="15">
    <source>
        <dbReference type="PDB" id="5FKA"/>
    </source>
</evidence>
<evidence type="ECO:0007829" key="16">
    <source>
        <dbReference type="PDB" id="4UDT"/>
    </source>
</evidence>
<protein>
    <recommendedName>
        <fullName evidence="10">T cell receptor alpha variable 22</fullName>
    </recommendedName>
</protein>
<reference key="1">
    <citation type="journal article" date="2003" name="Nature">
        <title>The DNA sequence and analysis of human chromosome 14.</title>
        <authorList>
            <person name="Heilig R."/>
            <person name="Eckenberg R."/>
            <person name="Petit J.-L."/>
            <person name="Fonknechten N."/>
            <person name="Da Silva C."/>
            <person name="Cattolico L."/>
            <person name="Levy M."/>
            <person name="Barbe V."/>
            <person name="De Berardinis V."/>
            <person name="Ureta-Vidal A."/>
            <person name="Pelletier E."/>
            <person name="Vico V."/>
            <person name="Anthouard V."/>
            <person name="Rowen L."/>
            <person name="Madan A."/>
            <person name="Qin S."/>
            <person name="Sun H."/>
            <person name="Du H."/>
            <person name="Pepin K."/>
            <person name="Artiguenave F."/>
            <person name="Robert C."/>
            <person name="Cruaud C."/>
            <person name="Bruels T."/>
            <person name="Jaillon O."/>
            <person name="Friedlander L."/>
            <person name="Samson G."/>
            <person name="Brottier P."/>
            <person name="Cure S."/>
            <person name="Segurens B."/>
            <person name="Aniere F."/>
            <person name="Samain S."/>
            <person name="Crespeau H."/>
            <person name="Abbasi N."/>
            <person name="Aiach N."/>
            <person name="Boscus D."/>
            <person name="Dickhoff R."/>
            <person name="Dors M."/>
            <person name="Dubois I."/>
            <person name="Friedman C."/>
            <person name="Gouyvenoux M."/>
            <person name="James R."/>
            <person name="Madan A."/>
            <person name="Mairey-Estrada B."/>
            <person name="Mangenot S."/>
            <person name="Martins N."/>
            <person name="Menard M."/>
            <person name="Oztas S."/>
            <person name="Ratcliffe A."/>
            <person name="Shaffer T."/>
            <person name="Trask B."/>
            <person name="Vacherie B."/>
            <person name="Bellemere C."/>
            <person name="Belser C."/>
            <person name="Besnard-Gonnet M."/>
            <person name="Bartol-Mavel D."/>
            <person name="Boutard M."/>
            <person name="Briez-Silla S."/>
            <person name="Combette S."/>
            <person name="Dufosse-Laurent V."/>
            <person name="Ferron C."/>
            <person name="Lechaplais C."/>
            <person name="Louesse C."/>
            <person name="Muselet D."/>
            <person name="Magdelenat G."/>
            <person name="Pateau E."/>
            <person name="Petit E."/>
            <person name="Sirvain-Trukniewicz P."/>
            <person name="Trybou A."/>
            <person name="Vega-Czarny N."/>
            <person name="Bataille E."/>
            <person name="Bluet E."/>
            <person name="Bordelais I."/>
            <person name="Dubois M."/>
            <person name="Dumont C."/>
            <person name="Guerin T."/>
            <person name="Haffray S."/>
            <person name="Hammadi R."/>
            <person name="Muanga J."/>
            <person name="Pellouin V."/>
            <person name="Robert D."/>
            <person name="Wunderle E."/>
            <person name="Gauguet G."/>
            <person name="Roy A."/>
            <person name="Sainte-Marthe L."/>
            <person name="Verdier J."/>
            <person name="Verdier-Discala C."/>
            <person name="Hillier L.W."/>
            <person name="Fulton L."/>
            <person name="McPherson J."/>
            <person name="Matsuda F."/>
            <person name="Wilson R."/>
            <person name="Scarpelli C."/>
            <person name="Gyapay G."/>
            <person name="Wincker P."/>
            <person name="Saurin W."/>
            <person name="Quetier F."/>
            <person name="Waterston R."/>
            <person name="Hood L."/>
            <person name="Weissenbach J."/>
        </authorList>
    </citation>
    <scope>NUCLEOTIDE SEQUENCE [LARGE SCALE GENOMIC DNA] (IMGT ALLELE TRAV22*01)</scope>
</reference>
<reference key="2">
    <citation type="book" date="2001" name="The T Cell Receptor FactsBook.">
        <title>The T Cell Receptor FactsBook.</title>
        <editorList>
            <person name="Lefranc M.P."/>
            <person name="Lefranc G."/>
        </editorList>
        <authorList>
            <person name="Lefranc M.P."/>
            <person name="Lefranc G."/>
        </authorList>
    </citation>
    <scope>NOMENCLATURE</scope>
</reference>
<reference key="3">
    <citation type="journal article" date="2004" name="Nat. Rev. Immunol.">
        <title>The many important facets of T-cell repertoire diversity.</title>
        <authorList>
            <person name="Nikolich-Zugich J."/>
            <person name="Slifka M.K."/>
            <person name="Messaoudi I."/>
        </authorList>
    </citation>
    <scope>REVIEW ON T CELL REPERTOIRE DIVERSITY</scope>
</reference>
<reference key="4">
    <citation type="journal article" date="2010" name="Cold Spring Harb. Perspect. Biol.">
        <title>Structural biology of the T-cell receptor: insights into receptor assembly, ligand recognition, and initiation of signaling.</title>
        <authorList>
            <person name="Wucherpfennig K.W."/>
            <person name="Gagnon E."/>
            <person name="Call M.J."/>
            <person name="Huseby E.S."/>
            <person name="Call M.E."/>
        </authorList>
    </citation>
    <scope>REVIEW ON T CELL RECEPTOR-CD3 COMPLEX ASSEMBLY</scope>
    <scope>SUBCELLULAR LOCATION</scope>
</reference>
<reference key="5">
    <citation type="journal article" date="2013" name="Nat. Rev. Immunol.">
        <title>T cell receptor signalling networks: branched, diversified and bounded.</title>
        <authorList>
            <person name="Brownlie R.J."/>
            <person name="Zamoyska R."/>
        </authorList>
    </citation>
    <scope>REVIEW ON T CELL RECEPTOR SIGNALING</scope>
</reference>
<reference key="6">
    <citation type="journal article" date="2014" name="Front. Immunol.">
        <title>Immunoglobulin and T Cell Receptor Genes: IMGT((R)) and the Birth and Rise of Immunoinformatics.</title>
        <authorList>
            <person name="Lefranc M.P."/>
        </authorList>
    </citation>
    <scope>NOMENCLATURE</scope>
</reference>
<reference key="7">
    <citation type="journal article" date="2015" name="Annu. Rev. Immunol.">
        <title>T cell antigen receptor recognition of antigen-presenting molecules.</title>
        <authorList>
            <person name="Rossjohn J."/>
            <person name="Gras S."/>
            <person name="Miles J.J."/>
            <person name="Turner S.J."/>
            <person name="Godfrey D.I."/>
            <person name="McCluskey J."/>
        </authorList>
    </citation>
    <scope>REVIEW ON FUNCTION</scope>
</reference>
<reference evidence="12 13" key="8">
    <citation type="journal article" date="2015" name="PLoS ONE">
        <title>Structure of Staphylococcal Enterotoxin E in Complex with TCR Defines the Role of TCR Loop Positioning in Superantigen Recognition.</title>
        <authorList>
            <person name="Rodstrom K.E."/>
            <person name="Regenthal P."/>
            <person name="Lindkvist-Petersson K."/>
        </authorList>
    </citation>
    <scope>X-RAY CRYSTALLOGRAPHY (1.35 ANGSTROMS) OF 21-110</scope>
    <scope>DISULFIDE BONDS</scope>
</reference>
<reference evidence="14 15" key="9">
    <citation type="journal article" date="2016" name="Sci. Rep.">
        <title>Two common structural motifs for TCR recognition by staphylococcal enterotoxins.</title>
        <authorList>
            <person name="Rodstrom K.E."/>
            <person name="Regenthal P."/>
            <person name="Bahl C."/>
            <person name="Ford A."/>
            <person name="Baker D."/>
            <person name="Lindkvist-Petersson K."/>
        </authorList>
    </citation>
    <scope>X-RAY CRYSTALLOGRAPHY (2.40 ANGSTROMS) OF 21-110</scope>
    <scope>DISULFIDE BONDS</scope>
</reference>
<sequence>MKRILGALLGLLSAQVCCVRGIQVEQSPPDLILQEGANSTLRCNFSDSVNNLQWFHQNPWGQLINLFYIPSGTKQNGRLSATTVATERYSLLYISSSQTTDSGVYFCAVE</sequence>
<feature type="signal peptide" evidence="1">
    <location>
        <begin position="1"/>
        <end position="21"/>
    </location>
</feature>
<feature type="chain" id="PRO_5002092614" description="T cell receptor alpha variable 22" evidence="1">
    <location>
        <begin position="22"/>
        <end position="110"/>
    </location>
</feature>
<feature type="domain" description="Ig-like" evidence="2">
    <location>
        <begin position="22"/>
        <end position="110" status="greater than"/>
    </location>
</feature>
<feature type="glycosylation site" description="N-linked (GlcNAc...) asparagine" evidence="1">
    <location>
        <position position="38"/>
    </location>
</feature>
<feature type="glycosylation site" description="N-linked (GlcNAc...) asparagine" evidence="1">
    <location>
        <position position="44"/>
    </location>
</feature>
<feature type="disulfide bond" evidence="2 3 4 12 13 14 15">
    <location>
        <begin position="43"/>
        <end position="107"/>
    </location>
</feature>
<feature type="non-terminal residue">
    <location>
        <position position="110"/>
    </location>
</feature>
<feature type="strand" evidence="16">
    <location>
        <begin position="24"/>
        <end position="27"/>
    </location>
</feature>
<feature type="strand" evidence="16">
    <location>
        <begin position="29"/>
        <end position="34"/>
    </location>
</feature>
<feature type="strand" evidence="16">
    <location>
        <begin position="39"/>
        <end position="47"/>
    </location>
</feature>
<feature type="strand" evidence="16">
    <location>
        <begin position="52"/>
        <end position="57"/>
    </location>
</feature>
<feature type="strand" evidence="16">
    <location>
        <begin position="63"/>
        <end position="68"/>
    </location>
</feature>
<feature type="strand" evidence="16">
    <location>
        <begin position="70"/>
        <end position="76"/>
    </location>
</feature>
<feature type="strand" evidence="16">
    <location>
        <begin position="79"/>
        <end position="84"/>
    </location>
</feature>
<feature type="helix" evidence="16">
    <location>
        <begin position="85"/>
        <end position="87"/>
    </location>
</feature>
<feature type="strand" evidence="16">
    <location>
        <begin position="89"/>
        <end position="94"/>
    </location>
</feature>
<feature type="helix" evidence="16">
    <location>
        <begin position="99"/>
        <end position="101"/>
    </location>
</feature>
<feature type="strand" evidence="16">
    <location>
        <begin position="103"/>
        <end position="109"/>
    </location>
</feature>
<name>TVA22_HUMAN</name>
<accession>A0A0B4J277</accession>